<name>PAND_LEPBL</name>
<proteinExistence type="inferred from homology"/>
<reference key="1">
    <citation type="journal article" date="2006" name="Proc. Natl. Acad. Sci. U.S.A.">
        <title>Genome reduction in Leptospira borgpetersenii reflects limited transmission potential.</title>
        <authorList>
            <person name="Bulach D.M."/>
            <person name="Zuerner R.L."/>
            <person name="Wilson P."/>
            <person name="Seemann T."/>
            <person name="McGrath A."/>
            <person name="Cullen P.A."/>
            <person name="Davis J."/>
            <person name="Johnson M."/>
            <person name="Kuczek E."/>
            <person name="Alt D.P."/>
            <person name="Peterson-Burch B."/>
            <person name="Coppel R.L."/>
            <person name="Rood J.I."/>
            <person name="Davies J.K."/>
            <person name="Adler B."/>
        </authorList>
    </citation>
    <scope>NUCLEOTIDE SEQUENCE [LARGE SCALE GENOMIC DNA]</scope>
    <source>
        <strain>L550</strain>
    </source>
</reference>
<feature type="chain" id="PRO_0000307005" description="Aspartate 1-decarboxylase beta chain" evidence="1">
    <location>
        <begin position="1"/>
        <end position="24"/>
    </location>
</feature>
<feature type="chain" id="PRO_0000307006" description="Aspartate 1-decarboxylase alpha chain" evidence="1">
    <location>
        <begin position="25"/>
        <end position="116"/>
    </location>
</feature>
<feature type="active site" description="Schiff-base intermediate with substrate; via pyruvic acid" evidence="1">
    <location>
        <position position="25"/>
    </location>
</feature>
<feature type="active site" description="Proton donor" evidence="1">
    <location>
        <position position="58"/>
    </location>
</feature>
<feature type="binding site" evidence="1">
    <location>
        <position position="57"/>
    </location>
    <ligand>
        <name>substrate</name>
    </ligand>
</feature>
<feature type="binding site" evidence="1">
    <location>
        <begin position="73"/>
        <end position="75"/>
    </location>
    <ligand>
        <name>substrate</name>
    </ligand>
</feature>
<feature type="modified residue" description="Pyruvic acid (Ser)" evidence="1">
    <location>
        <position position="25"/>
    </location>
</feature>
<accession>Q052G3</accession>
<sequence>MQITVMKGKIHRATVTDADLNYEGSLTVDMDLVDAAGMRVYEKVSVVNINNGARFETYIIEGKRGSGEICLNGAAARLGMKGDKIIVITYAQVEENELPIDYIPKVVHVDENNRKR</sequence>
<organism>
    <name type="scientific">Leptospira borgpetersenii serovar Hardjo-bovis (strain L550)</name>
    <dbReference type="NCBI Taxonomy" id="355276"/>
    <lineage>
        <taxon>Bacteria</taxon>
        <taxon>Pseudomonadati</taxon>
        <taxon>Spirochaetota</taxon>
        <taxon>Spirochaetia</taxon>
        <taxon>Leptospirales</taxon>
        <taxon>Leptospiraceae</taxon>
        <taxon>Leptospira</taxon>
    </lineage>
</organism>
<evidence type="ECO:0000255" key="1">
    <source>
        <dbReference type="HAMAP-Rule" id="MF_00446"/>
    </source>
</evidence>
<gene>
    <name evidence="1" type="primary">panD</name>
    <name type="ordered locus">LBL_1285</name>
</gene>
<comment type="function">
    <text evidence="1">Catalyzes the pyruvoyl-dependent decarboxylation of aspartate to produce beta-alanine.</text>
</comment>
<comment type="catalytic activity">
    <reaction evidence="1">
        <text>L-aspartate + H(+) = beta-alanine + CO2</text>
        <dbReference type="Rhea" id="RHEA:19497"/>
        <dbReference type="ChEBI" id="CHEBI:15378"/>
        <dbReference type="ChEBI" id="CHEBI:16526"/>
        <dbReference type="ChEBI" id="CHEBI:29991"/>
        <dbReference type="ChEBI" id="CHEBI:57966"/>
        <dbReference type="EC" id="4.1.1.11"/>
    </reaction>
</comment>
<comment type="cofactor">
    <cofactor evidence="1">
        <name>pyruvate</name>
        <dbReference type="ChEBI" id="CHEBI:15361"/>
    </cofactor>
    <text evidence="1">Binds 1 pyruvoyl group covalently per subunit.</text>
</comment>
<comment type="pathway">
    <text evidence="1">Cofactor biosynthesis; (R)-pantothenate biosynthesis; beta-alanine from L-aspartate: step 1/1.</text>
</comment>
<comment type="subunit">
    <text evidence="1">Heterooctamer of four alpha and four beta subunits.</text>
</comment>
<comment type="subcellular location">
    <subcellularLocation>
        <location evidence="1">Cytoplasm</location>
    </subcellularLocation>
</comment>
<comment type="PTM">
    <text evidence="1">Is synthesized initially as an inactive proenzyme, which is activated by self-cleavage at a specific serine bond to produce a beta-subunit with a hydroxyl group at its C-terminus and an alpha-subunit with a pyruvoyl group at its N-terminus.</text>
</comment>
<comment type="similarity">
    <text evidence="1">Belongs to the PanD family.</text>
</comment>
<keyword id="KW-0068">Autocatalytic cleavage</keyword>
<keyword id="KW-0963">Cytoplasm</keyword>
<keyword id="KW-0210">Decarboxylase</keyword>
<keyword id="KW-0456">Lyase</keyword>
<keyword id="KW-0566">Pantothenate biosynthesis</keyword>
<keyword id="KW-0670">Pyruvate</keyword>
<keyword id="KW-0704">Schiff base</keyword>
<keyword id="KW-0865">Zymogen</keyword>
<protein>
    <recommendedName>
        <fullName evidence="1">Aspartate 1-decarboxylase</fullName>
        <ecNumber evidence="1">4.1.1.11</ecNumber>
    </recommendedName>
    <alternativeName>
        <fullName evidence="1">Aspartate alpha-decarboxylase</fullName>
    </alternativeName>
    <component>
        <recommendedName>
            <fullName evidence="1">Aspartate 1-decarboxylase beta chain</fullName>
        </recommendedName>
    </component>
    <component>
        <recommendedName>
            <fullName evidence="1">Aspartate 1-decarboxylase alpha chain</fullName>
        </recommendedName>
    </component>
</protein>
<dbReference type="EC" id="4.1.1.11" evidence="1"/>
<dbReference type="EMBL" id="CP000348">
    <property type="protein sequence ID" value="ABJ78782.1"/>
    <property type="molecule type" value="Genomic_DNA"/>
</dbReference>
<dbReference type="SMR" id="Q052G3"/>
<dbReference type="KEGG" id="lbl:LBL_1285"/>
<dbReference type="HOGENOM" id="CLU_115305_2_0_12"/>
<dbReference type="UniPathway" id="UPA00028">
    <property type="reaction ID" value="UER00002"/>
</dbReference>
<dbReference type="GO" id="GO:0005829">
    <property type="term" value="C:cytosol"/>
    <property type="evidence" value="ECO:0007669"/>
    <property type="project" value="TreeGrafter"/>
</dbReference>
<dbReference type="GO" id="GO:0004068">
    <property type="term" value="F:aspartate 1-decarboxylase activity"/>
    <property type="evidence" value="ECO:0007669"/>
    <property type="project" value="UniProtKB-UniRule"/>
</dbReference>
<dbReference type="GO" id="GO:0006523">
    <property type="term" value="P:alanine biosynthetic process"/>
    <property type="evidence" value="ECO:0007669"/>
    <property type="project" value="InterPro"/>
</dbReference>
<dbReference type="GO" id="GO:0015940">
    <property type="term" value="P:pantothenate biosynthetic process"/>
    <property type="evidence" value="ECO:0007669"/>
    <property type="project" value="UniProtKB-UniRule"/>
</dbReference>
<dbReference type="CDD" id="cd06919">
    <property type="entry name" value="Asp_decarbox"/>
    <property type="match status" value="1"/>
</dbReference>
<dbReference type="Gene3D" id="2.40.40.20">
    <property type="match status" value="1"/>
</dbReference>
<dbReference type="HAMAP" id="MF_00446">
    <property type="entry name" value="PanD"/>
    <property type="match status" value="1"/>
</dbReference>
<dbReference type="InterPro" id="IPR009010">
    <property type="entry name" value="Asp_de-COase-like_dom_sf"/>
</dbReference>
<dbReference type="InterPro" id="IPR003190">
    <property type="entry name" value="Asp_decarbox"/>
</dbReference>
<dbReference type="NCBIfam" id="TIGR00223">
    <property type="entry name" value="panD"/>
    <property type="match status" value="1"/>
</dbReference>
<dbReference type="PANTHER" id="PTHR21012">
    <property type="entry name" value="ASPARTATE 1-DECARBOXYLASE"/>
    <property type="match status" value="1"/>
</dbReference>
<dbReference type="PANTHER" id="PTHR21012:SF0">
    <property type="entry name" value="ASPARTATE 1-DECARBOXYLASE"/>
    <property type="match status" value="1"/>
</dbReference>
<dbReference type="Pfam" id="PF02261">
    <property type="entry name" value="Asp_decarbox"/>
    <property type="match status" value="1"/>
</dbReference>
<dbReference type="PIRSF" id="PIRSF006246">
    <property type="entry name" value="Asp_decarbox"/>
    <property type="match status" value="1"/>
</dbReference>
<dbReference type="SUPFAM" id="SSF50692">
    <property type="entry name" value="ADC-like"/>
    <property type="match status" value="1"/>
</dbReference>